<dbReference type="EMBL" id="AF419317">
    <property type="protein sequence ID" value="AAL37725.1"/>
    <property type="molecule type" value="mRNA"/>
</dbReference>
<dbReference type="EMBL" id="AB090162">
    <property type="protein sequence ID" value="BAC54960.1"/>
    <property type="status" value="ALT_INIT"/>
    <property type="molecule type" value="mRNA"/>
</dbReference>
<dbReference type="RefSeq" id="NP_999260.1">
    <property type="nucleotide sequence ID" value="NM_214095.1"/>
</dbReference>
<dbReference type="RefSeq" id="XP_005672071.1">
    <property type="nucleotide sequence ID" value="XM_005672014.2"/>
</dbReference>
<dbReference type="RefSeq" id="XP_005672072.1">
    <property type="nucleotide sequence ID" value="XM_005672015.2"/>
</dbReference>
<dbReference type="RefSeq" id="XP_013839785.1">
    <property type="nucleotide sequence ID" value="XM_013984331.1"/>
</dbReference>
<dbReference type="SMR" id="Q8WN93"/>
<dbReference type="FunCoup" id="Q8WN93">
    <property type="interactions" value="188"/>
</dbReference>
<dbReference type="STRING" id="9823.ENSSSCP00000039864"/>
<dbReference type="BindingDB" id="Q8WN93"/>
<dbReference type="GlyCosmos" id="Q8WN93">
    <property type="glycosylation" value="3 sites, No reported glycans"/>
</dbReference>
<dbReference type="GlyGen" id="Q8WN93">
    <property type="glycosylation" value="3 sites"/>
</dbReference>
<dbReference type="PaxDb" id="9823-ENSSSCP00000016986"/>
<dbReference type="PeptideAtlas" id="Q8WN93"/>
<dbReference type="GeneID" id="397172"/>
<dbReference type="KEGG" id="ssc:397172"/>
<dbReference type="CTD" id="10203"/>
<dbReference type="eggNOG" id="KOG4564">
    <property type="taxonomic scope" value="Eukaryota"/>
</dbReference>
<dbReference type="HOGENOM" id="CLU_002753_4_2_1"/>
<dbReference type="InParanoid" id="Q8WN93"/>
<dbReference type="OMA" id="LHMNLFS"/>
<dbReference type="OrthoDB" id="16753at2759"/>
<dbReference type="TreeFam" id="TF315710"/>
<dbReference type="Proteomes" id="UP000008227">
    <property type="component" value="Unplaced"/>
</dbReference>
<dbReference type="Proteomes" id="UP000314985">
    <property type="component" value="Unplaced"/>
</dbReference>
<dbReference type="Proteomes" id="UP000694570">
    <property type="component" value="Unplaced"/>
</dbReference>
<dbReference type="Proteomes" id="UP000694571">
    <property type="component" value="Unplaced"/>
</dbReference>
<dbReference type="Proteomes" id="UP000694720">
    <property type="component" value="Unplaced"/>
</dbReference>
<dbReference type="Proteomes" id="UP000694722">
    <property type="component" value="Unplaced"/>
</dbReference>
<dbReference type="Proteomes" id="UP000694723">
    <property type="component" value="Unplaced"/>
</dbReference>
<dbReference type="Proteomes" id="UP000694724">
    <property type="component" value="Unplaced"/>
</dbReference>
<dbReference type="Proteomes" id="UP000694725">
    <property type="component" value="Unplaced"/>
</dbReference>
<dbReference type="Proteomes" id="UP000694726">
    <property type="component" value="Unplaced"/>
</dbReference>
<dbReference type="Proteomes" id="UP000694727">
    <property type="component" value="Unplaced"/>
</dbReference>
<dbReference type="Proteomes" id="UP000694728">
    <property type="component" value="Unplaced"/>
</dbReference>
<dbReference type="GO" id="GO:0005886">
    <property type="term" value="C:plasma membrane"/>
    <property type="evidence" value="ECO:0000318"/>
    <property type="project" value="GO_Central"/>
</dbReference>
<dbReference type="GO" id="GO:0001605">
    <property type="term" value="F:adrenomedullin receptor activity"/>
    <property type="evidence" value="ECO:0000318"/>
    <property type="project" value="GO_Central"/>
</dbReference>
<dbReference type="GO" id="GO:0001635">
    <property type="term" value="F:calcitonin gene-related peptide receptor activity"/>
    <property type="evidence" value="ECO:0000318"/>
    <property type="project" value="GO_Central"/>
</dbReference>
<dbReference type="GO" id="GO:0004948">
    <property type="term" value="F:calcitonin receptor activity"/>
    <property type="evidence" value="ECO:0007669"/>
    <property type="project" value="InterPro"/>
</dbReference>
<dbReference type="GO" id="GO:0007189">
    <property type="term" value="P:adenylate cyclase-activating G protein-coupled receptor signaling pathway"/>
    <property type="evidence" value="ECO:0000353"/>
    <property type="project" value="UniProtKB"/>
</dbReference>
<dbReference type="GO" id="GO:1990410">
    <property type="term" value="P:adrenomedullin receptor signaling pathway"/>
    <property type="evidence" value="ECO:0000353"/>
    <property type="project" value="UniProtKB"/>
</dbReference>
<dbReference type="GO" id="GO:0001525">
    <property type="term" value="P:angiogenesis"/>
    <property type="evidence" value="ECO:0000318"/>
    <property type="project" value="GO_Central"/>
</dbReference>
<dbReference type="GO" id="GO:1990408">
    <property type="term" value="P:calcitonin gene-related peptide receptor signaling pathway"/>
    <property type="evidence" value="ECO:0000353"/>
    <property type="project" value="UniProtKB"/>
</dbReference>
<dbReference type="GO" id="GO:0007166">
    <property type="term" value="P:cell surface receptor signaling pathway"/>
    <property type="evidence" value="ECO:0007669"/>
    <property type="project" value="InterPro"/>
</dbReference>
<dbReference type="CDD" id="cd15274">
    <property type="entry name" value="7tmB1_calcitonin_R"/>
    <property type="match status" value="1"/>
</dbReference>
<dbReference type="FunFam" id="1.20.1070.10:FF:000079">
    <property type="entry name" value="Calcitonin gene-related peptide type 1 receptor"/>
    <property type="match status" value="1"/>
</dbReference>
<dbReference type="FunFam" id="4.10.1240.10:FF:000011">
    <property type="entry name" value="Calcitonin gene-related peptide type 1 receptor"/>
    <property type="match status" value="1"/>
</dbReference>
<dbReference type="Gene3D" id="4.10.1240.10">
    <property type="entry name" value="GPCR, family 2, extracellular hormone receptor domain"/>
    <property type="match status" value="1"/>
</dbReference>
<dbReference type="Gene3D" id="1.20.1070.10">
    <property type="entry name" value="Rhodopsin 7-helix transmembrane proteins"/>
    <property type="match status" value="1"/>
</dbReference>
<dbReference type="InterPro" id="IPR050332">
    <property type="entry name" value="GPCR_2"/>
</dbReference>
<dbReference type="InterPro" id="IPR017981">
    <property type="entry name" value="GPCR_2-like_7TM"/>
</dbReference>
<dbReference type="InterPro" id="IPR003287">
    <property type="entry name" value="GPCR_2_calcitonin_rcpt_fam"/>
</dbReference>
<dbReference type="InterPro" id="IPR003289">
    <property type="entry name" value="GPCR_2_CGRP1_rcpt"/>
</dbReference>
<dbReference type="InterPro" id="IPR036445">
    <property type="entry name" value="GPCR_2_extracell_dom_sf"/>
</dbReference>
<dbReference type="InterPro" id="IPR001879">
    <property type="entry name" value="GPCR_2_extracellular_dom"/>
</dbReference>
<dbReference type="InterPro" id="IPR000832">
    <property type="entry name" value="GPCR_2_secretin-like"/>
</dbReference>
<dbReference type="InterPro" id="IPR017983">
    <property type="entry name" value="GPCR_2_secretin-like_CS"/>
</dbReference>
<dbReference type="PANTHER" id="PTHR45620:SF21">
    <property type="entry name" value="CALCITONIN GENE-RELATED PEPTIDE TYPE 1 RECEPTOR"/>
    <property type="match status" value="1"/>
</dbReference>
<dbReference type="PANTHER" id="PTHR45620">
    <property type="entry name" value="PDF RECEPTOR-LIKE PROTEIN-RELATED"/>
    <property type="match status" value="1"/>
</dbReference>
<dbReference type="Pfam" id="PF00002">
    <property type="entry name" value="7tm_2"/>
    <property type="match status" value="1"/>
</dbReference>
<dbReference type="Pfam" id="PF02793">
    <property type="entry name" value="HRM"/>
    <property type="match status" value="1"/>
</dbReference>
<dbReference type="PRINTS" id="PR01351">
    <property type="entry name" value="CGRPRECEPTOR"/>
</dbReference>
<dbReference type="PRINTS" id="PR01350">
    <property type="entry name" value="CTRFAMILY"/>
</dbReference>
<dbReference type="PRINTS" id="PR00249">
    <property type="entry name" value="GPCRSECRETIN"/>
</dbReference>
<dbReference type="SMART" id="SM00008">
    <property type="entry name" value="HormR"/>
    <property type="match status" value="1"/>
</dbReference>
<dbReference type="SUPFAM" id="SSF81321">
    <property type="entry name" value="Family A G protein-coupled receptor-like"/>
    <property type="match status" value="1"/>
</dbReference>
<dbReference type="SUPFAM" id="SSF111418">
    <property type="entry name" value="Hormone receptor domain"/>
    <property type="match status" value="1"/>
</dbReference>
<dbReference type="PROSITE" id="PS00649">
    <property type="entry name" value="G_PROTEIN_RECEP_F2_1"/>
    <property type="match status" value="1"/>
</dbReference>
<dbReference type="PROSITE" id="PS00650">
    <property type="entry name" value="G_PROTEIN_RECEP_F2_2"/>
    <property type="match status" value="1"/>
</dbReference>
<dbReference type="PROSITE" id="PS50227">
    <property type="entry name" value="G_PROTEIN_RECEP_F2_3"/>
    <property type="match status" value="1"/>
</dbReference>
<dbReference type="PROSITE" id="PS50261">
    <property type="entry name" value="G_PROTEIN_RECEP_F2_4"/>
    <property type="match status" value="1"/>
</dbReference>
<proteinExistence type="evidence at protein level"/>
<comment type="function">
    <text evidence="1 4 5">G protein-coupled receptor which specificity is determined by its interaction with receptor-activity-modifying proteins (RAMPs). Together with RAMP1, form the receptor complex for calcitonin-gene-related peptides CALCA/CGRP1 and CALCB/CGRP2 (PubMed:11714898, PubMed:12630807). Together with RAMP2 or RAMP3, function as receptor complexes for adrenomedullin (ADM and ADM2) (PubMed:11714898, PubMed:12630807). Ligand binding causes a conformation change that triggers signaling via guanine nucleotide-binding proteins (G proteins) and modulates the activity of downstream effectors. Activates cAMP-dependent pathway (By similarity).</text>
</comment>
<comment type="subunit">
    <text evidence="5">Heterodimer of CALCRL and RAMP1; the receptor complex functions as CGRP receptor. Heterodimer of CALCRL and RAMP2 or CALCRL and RAMP3; the complexes function as adrenomedullin receptor.</text>
</comment>
<comment type="subcellular location">
    <subcellularLocation>
        <location evidence="4">Cell membrane</location>
        <topology evidence="1">Multi-pass membrane protein</topology>
    </subcellularLocation>
</comment>
<comment type="tissue specificity">
    <text evidence="4">Detected in lung and coronary artery.</text>
</comment>
<comment type="similarity">
    <text evidence="6">Belongs to the G-protein coupled receptor 2 family.</text>
</comment>
<comment type="sequence caution" evidence="6">
    <conflict type="erroneous initiation">
        <sequence resource="EMBL-CDS" id="BAC54960"/>
    </conflict>
</comment>
<reference key="1">
    <citation type="journal article" date="2001" name="J. Pharmacol. Exp. Ther.">
        <title>Functional calcitonin gene-related peptide subtype 2 receptors in porcine coronary arteries are identified as calcitonin gene-related peptide subtype 1 receptors by radioligand binding and reverse transcription-polymerase chain reaction.</title>
        <authorList>
            <person name="Rorabaugh B.R."/>
            <person name="Scofield M.A."/>
            <person name="Smith D.D."/>
            <person name="Jeffries W.B."/>
            <person name="Abel P.W."/>
        </authorList>
    </citation>
    <scope>NUCLEOTIDE SEQUENCE [MRNA]</scope>
    <scope>FUNCTION</scope>
    <scope>SUBCELLULAR LOCATION</scope>
    <scope>TISSUE SPECIFICITY</scope>
    <source>
        <tissue>Coronary artery</tissue>
    </source>
</reference>
<reference key="2">
    <citation type="journal article" date="2003" name="Hypertens. Res.">
        <title>Specificity of porcine calcitonin receptor and calcitonin receptor-like receptor in the presence of receptor-activity-modifying proteins.</title>
        <authorList>
            <person name="Kikumoto K."/>
            <person name="Katafuchi T."/>
            <person name="Minamino N."/>
        </authorList>
    </citation>
    <scope>NUCLEOTIDE SEQUENCE [MRNA]</scope>
    <scope>FUNCTION</scope>
    <scope>INTERACTION WITH RAMP1; RAMP2 AND RAMP3</scope>
</reference>
<keyword id="KW-1003">Cell membrane</keyword>
<keyword id="KW-1015">Disulfide bond</keyword>
<keyword id="KW-0297">G-protein coupled receptor</keyword>
<keyword id="KW-0325">Glycoprotein</keyword>
<keyword id="KW-0472">Membrane</keyword>
<keyword id="KW-0597">Phosphoprotein</keyword>
<keyword id="KW-0675">Receptor</keyword>
<keyword id="KW-1185">Reference proteome</keyword>
<keyword id="KW-0732">Signal</keyword>
<keyword id="KW-0807">Transducer</keyword>
<keyword id="KW-0812">Transmembrane</keyword>
<keyword id="KW-1133">Transmembrane helix</keyword>
<feature type="signal peptide" evidence="3">
    <location>
        <begin position="1"/>
        <end position="22"/>
    </location>
</feature>
<feature type="chain" id="PRO_0000373832" description="Calcitonin gene-related peptide type 1 receptor">
    <location>
        <begin position="23"/>
        <end position="462"/>
    </location>
</feature>
<feature type="topological domain" description="Extracellular" evidence="6">
    <location>
        <begin position="23"/>
        <end position="140"/>
    </location>
</feature>
<feature type="transmembrane region" description="Helical; Name=1" evidence="1">
    <location>
        <begin position="141"/>
        <end position="165"/>
    </location>
</feature>
<feature type="topological domain" description="Cytoplasmic" evidence="6">
    <location>
        <begin position="166"/>
        <end position="176"/>
    </location>
</feature>
<feature type="transmembrane region" description="Helical; Name=2" evidence="1">
    <location>
        <begin position="177"/>
        <end position="199"/>
    </location>
</feature>
<feature type="topological domain" description="Extracellular" evidence="6">
    <location>
        <begin position="200"/>
        <end position="210"/>
    </location>
</feature>
<feature type="transmembrane region" description="Helical; Name=3" evidence="1">
    <location>
        <begin position="211"/>
        <end position="239"/>
    </location>
</feature>
<feature type="topological domain" description="Cytoplasmic" evidence="6">
    <location>
        <begin position="240"/>
        <end position="253"/>
    </location>
</feature>
<feature type="transmembrane region" description="Helical; Name=4" evidence="1">
    <location>
        <begin position="254"/>
        <end position="274"/>
    </location>
</feature>
<feature type="topological domain" description="Extracellular" evidence="6">
    <location>
        <begin position="275"/>
        <end position="290"/>
    </location>
</feature>
<feature type="transmembrane region" description="Helical; Name=5" evidence="1">
    <location>
        <begin position="291"/>
        <end position="315"/>
    </location>
</feature>
<feature type="topological domain" description="Cytoplasmic" evidence="6">
    <location>
        <begin position="316"/>
        <end position="330"/>
    </location>
</feature>
<feature type="transmembrane region" description="Helical; Name=6" evidence="1">
    <location>
        <begin position="331"/>
        <end position="352"/>
    </location>
</feature>
<feature type="topological domain" description="Extracellular" evidence="6">
    <location>
        <begin position="353"/>
        <end position="367"/>
    </location>
</feature>
<feature type="transmembrane region" description="Helical; Name=7" evidence="1">
    <location>
        <begin position="368"/>
        <end position="388"/>
    </location>
</feature>
<feature type="topological domain" description="Cytoplasmic" evidence="6">
    <location>
        <begin position="389"/>
        <end position="462"/>
    </location>
</feature>
<feature type="region of interest" description="Required for RAMP3 interaction" evidence="1">
    <location>
        <begin position="289"/>
        <end position="290"/>
    </location>
</feature>
<feature type="site" description="Required for ADM interaction" evidence="1">
    <location>
        <position position="203"/>
    </location>
</feature>
<feature type="site" description="Required for RAMP3 interaction" evidence="1">
    <location>
        <position position="251"/>
    </location>
</feature>
<feature type="site" description="Required for ADM2 interaction" evidence="1">
    <location>
        <position position="287"/>
    </location>
</feature>
<feature type="site" description="Required for RAMP2 interaction" evidence="1">
    <location>
        <position position="289"/>
    </location>
</feature>
<feature type="site" description="Required for ADM2 interaction" evidence="1">
    <location>
        <position position="296"/>
    </location>
</feature>
<feature type="site" description="Required for ADM2 interaction" evidence="1">
    <location>
        <position position="355"/>
    </location>
</feature>
<feature type="modified residue" description="Phosphoserine" evidence="2">
    <location>
        <position position="421"/>
    </location>
</feature>
<feature type="modified residue" description="Phosphoserine" evidence="2">
    <location>
        <position position="446"/>
    </location>
</feature>
<feature type="glycosylation site" description="N-linked (GlcNAc...) asparagine" evidence="3">
    <location>
        <position position="67"/>
    </location>
</feature>
<feature type="glycosylation site" description="N-linked (GlcNAc...) asparagine" evidence="3">
    <location>
        <position position="119"/>
    </location>
</feature>
<feature type="glycosylation site" description="N-linked (GlcNAc...) asparagine" evidence="3">
    <location>
        <position position="124"/>
    </location>
</feature>
<feature type="disulfide bond" evidence="1">
    <location>
        <begin position="49"/>
        <end position="75"/>
    </location>
</feature>
<feature type="disulfide bond" evidence="1">
    <location>
        <begin position="66"/>
        <end position="106"/>
    </location>
</feature>
<feature type="disulfide bond" evidence="1">
    <location>
        <begin position="89"/>
        <end position="128"/>
    </location>
</feature>
<organism>
    <name type="scientific">Sus scrofa</name>
    <name type="common">Pig</name>
    <dbReference type="NCBI Taxonomy" id="9823"/>
    <lineage>
        <taxon>Eukaryota</taxon>
        <taxon>Metazoa</taxon>
        <taxon>Chordata</taxon>
        <taxon>Craniata</taxon>
        <taxon>Vertebrata</taxon>
        <taxon>Euteleostomi</taxon>
        <taxon>Mammalia</taxon>
        <taxon>Eutheria</taxon>
        <taxon>Laurasiatheria</taxon>
        <taxon>Artiodactyla</taxon>
        <taxon>Suina</taxon>
        <taxon>Suidae</taxon>
        <taxon>Sus</taxon>
    </lineage>
</organism>
<name>CALRL_PIG</name>
<sequence length="462" mass="53656">MEKKYILYFLFLLPFFMILVIAETEEENPDDLIQLTVTRNKIMTAQYECYQKIMQDPIQQTEGIYCNRTWDGWLCWNDVAAGTESMQHCPDYFQDFDPSEKVTKICDQDGNWFRHPESNRTWTNYTQCNINTHEKVQTALNLFYLTIIGHGLSIASLLISLGIFFYFKSLSCQRITLHKNLFFSFVCNSIVTIIHLTAVANNQALVATNPVSCKVFQFIHLYLMGCNYFWMLCEGIYLHTLIVVAVFAEKQHLMWYYFLGWGFPLIPACIHAVARRLYYNDNCWISSDTHLLYIIHGPICAALLVNLFFLLNIVRVLITKLKVTHQAESNLYMKAVRATLILVPLLGIEFVLIPWRPEGKIAEEVYDYIMHILVHYQGLLVSTIYCFFNGEVQAILRRNWNQYKIQFGNSFSHSDALRSASYTVSTISDGAGYSHDYPSEHLNGKSIHDMENIVIKPEKLYD</sequence>
<evidence type="ECO:0000250" key="1">
    <source>
        <dbReference type="UniProtKB" id="Q16602"/>
    </source>
</evidence>
<evidence type="ECO:0000250" key="2">
    <source>
        <dbReference type="UniProtKB" id="Q9R1W5"/>
    </source>
</evidence>
<evidence type="ECO:0000255" key="3"/>
<evidence type="ECO:0000269" key="4">
    <source>
    </source>
</evidence>
<evidence type="ECO:0000269" key="5">
    <source>
    </source>
</evidence>
<evidence type="ECO:0000305" key="6"/>
<gene>
    <name type="primary">CALCRL</name>
    <name type="synonym">CGRPR</name>
</gene>
<accession>Q8WN93</accession>
<accession>Q867C1</accession>
<protein>
    <recommendedName>
        <fullName>Calcitonin gene-related peptide type 1 receptor</fullName>
        <shortName>CGRP type 1 receptor</shortName>
    </recommendedName>
    <alternativeName>
        <fullName>Calcitonin receptor-like receptor</fullName>
    </alternativeName>
</protein>